<gene>
    <name evidence="1" type="primary">lepA</name>
    <name type="ordered locus">VSAL_I2527</name>
</gene>
<evidence type="ECO:0000255" key="1">
    <source>
        <dbReference type="HAMAP-Rule" id="MF_00071"/>
    </source>
</evidence>
<comment type="function">
    <text evidence="1">Required for accurate and efficient protein synthesis under certain stress conditions. May act as a fidelity factor of the translation reaction, by catalyzing a one-codon backward translocation of tRNAs on improperly translocated ribosomes. Back-translocation proceeds from a post-translocation (POST) complex to a pre-translocation (PRE) complex, thus giving elongation factor G a second chance to translocate the tRNAs correctly. Binds to ribosomes in a GTP-dependent manner.</text>
</comment>
<comment type="catalytic activity">
    <reaction evidence="1">
        <text>GTP + H2O = GDP + phosphate + H(+)</text>
        <dbReference type="Rhea" id="RHEA:19669"/>
        <dbReference type="ChEBI" id="CHEBI:15377"/>
        <dbReference type="ChEBI" id="CHEBI:15378"/>
        <dbReference type="ChEBI" id="CHEBI:37565"/>
        <dbReference type="ChEBI" id="CHEBI:43474"/>
        <dbReference type="ChEBI" id="CHEBI:58189"/>
        <dbReference type="EC" id="3.6.5.n1"/>
    </reaction>
</comment>
<comment type="subcellular location">
    <subcellularLocation>
        <location evidence="1">Cell inner membrane</location>
        <topology evidence="1">Peripheral membrane protein</topology>
        <orientation evidence="1">Cytoplasmic side</orientation>
    </subcellularLocation>
</comment>
<comment type="similarity">
    <text evidence="1">Belongs to the TRAFAC class translation factor GTPase superfamily. Classic translation factor GTPase family. LepA subfamily.</text>
</comment>
<feature type="chain" id="PRO_1000092368" description="Elongation factor 4">
    <location>
        <begin position="1"/>
        <end position="597"/>
    </location>
</feature>
<feature type="domain" description="tr-type G">
    <location>
        <begin position="2"/>
        <end position="184"/>
    </location>
</feature>
<feature type="binding site" evidence="1">
    <location>
        <begin position="14"/>
        <end position="19"/>
    </location>
    <ligand>
        <name>GTP</name>
        <dbReference type="ChEBI" id="CHEBI:37565"/>
    </ligand>
</feature>
<feature type="binding site" evidence="1">
    <location>
        <begin position="131"/>
        <end position="134"/>
    </location>
    <ligand>
        <name>GTP</name>
        <dbReference type="ChEBI" id="CHEBI:37565"/>
    </ligand>
</feature>
<dbReference type="EC" id="3.6.5.n1" evidence="1"/>
<dbReference type="EMBL" id="FM178379">
    <property type="protein sequence ID" value="CAQ80211.1"/>
    <property type="molecule type" value="Genomic_DNA"/>
</dbReference>
<dbReference type="RefSeq" id="WP_012550999.1">
    <property type="nucleotide sequence ID" value="NC_011312.1"/>
</dbReference>
<dbReference type="SMR" id="B6EKN1"/>
<dbReference type="KEGG" id="vsa:VSAL_I2527"/>
<dbReference type="eggNOG" id="COG0481">
    <property type="taxonomic scope" value="Bacteria"/>
</dbReference>
<dbReference type="HOGENOM" id="CLU_009995_3_3_6"/>
<dbReference type="Proteomes" id="UP000001730">
    <property type="component" value="Chromosome 1"/>
</dbReference>
<dbReference type="GO" id="GO:0005886">
    <property type="term" value="C:plasma membrane"/>
    <property type="evidence" value="ECO:0007669"/>
    <property type="project" value="UniProtKB-SubCell"/>
</dbReference>
<dbReference type="GO" id="GO:0005525">
    <property type="term" value="F:GTP binding"/>
    <property type="evidence" value="ECO:0007669"/>
    <property type="project" value="UniProtKB-UniRule"/>
</dbReference>
<dbReference type="GO" id="GO:0003924">
    <property type="term" value="F:GTPase activity"/>
    <property type="evidence" value="ECO:0007669"/>
    <property type="project" value="UniProtKB-UniRule"/>
</dbReference>
<dbReference type="GO" id="GO:0097216">
    <property type="term" value="F:guanosine tetraphosphate binding"/>
    <property type="evidence" value="ECO:0007669"/>
    <property type="project" value="UniProtKB-ARBA"/>
</dbReference>
<dbReference type="GO" id="GO:0043022">
    <property type="term" value="F:ribosome binding"/>
    <property type="evidence" value="ECO:0007669"/>
    <property type="project" value="UniProtKB-UniRule"/>
</dbReference>
<dbReference type="GO" id="GO:0003746">
    <property type="term" value="F:translation elongation factor activity"/>
    <property type="evidence" value="ECO:0007669"/>
    <property type="project" value="UniProtKB-UniRule"/>
</dbReference>
<dbReference type="GO" id="GO:0045727">
    <property type="term" value="P:positive regulation of translation"/>
    <property type="evidence" value="ECO:0007669"/>
    <property type="project" value="UniProtKB-UniRule"/>
</dbReference>
<dbReference type="CDD" id="cd03699">
    <property type="entry name" value="EF4_II"/>
    <property type="match status" value="1"/>
</dbReference>
<dbReference type="CDD" id="cd16260">
    <property type="entry name" value="EF4_III"/>
    <property type="match status" value="1"/>
</dbReference>
<dbReference type="CDD" id="cd01890">
    <property type="entry name" value="LepA"/>
    <property type="match status" value="1"/>
</dbReference>
<dbReference type="CDD" id="cd03709">
    <property type="entry name" value="lepA_C"/>
    <property type="match status" value="1"/>
</dbReference>
<dbReference type="FunFam" id="3.40.50.300:FF:000078">
    <property type="entry name" value="Elongation factor 4"/>
    <property type="match status" value="1"/>
</dbReference>
<dbReference type="FunFam" id="2.40.30.10:FF:000015">
    <property type="entry name" value="Translation factor GUF1, mitochondrial"/>
    <property type="match status" value="1"/>
</dbReference>
<dbReference type="FunFam" id="3.30.70.240:FF:000007">
    <property type="entry name" value="Translation factor GUF1, mitochondrial"/>
    <property type="match status" value="1"/>
</dbReference>
<dbReference type="FunFam" id="3.30.70.2570:FF:000001">
    <property type="entry name" value="Translation factor GUF1, mitochondrial"/>
    <property type="match status" value="1"/>
</dbReference>
<dbReference type="FunFam" id="3.30.70.870:FF:000004">
    <property type="entry name" value="Translation factor GUF1, mitochondrial"/>
    <property type="match status" value="1"/>
</dbReference>
<dbReference type="Gene3D" id="3.30.70.240">
    <property type="match status" value="1"/>
</dbReference>
<dbReference type="Gene3D" id="3.30.70.2570">
    <property type="entry name" value="Elongation factor 4, C-terminal domain"/>
    <property type="match status" value="1"/>
</dbReference>
<dbReference type="Gene3D" id="3.30.70.870">
    <property type="entry name" value="Elongation Factor G (Translational Gtpase), domain 3"/>
    <property type="match status" value="1"/>
</dbReference>
<dbReference type="Gene3D" id="3.40.50.300">
    <property type="entry name" value="P-loop containing nucleotide triphosphate hydrolases"/>
    <property type="match status" value="1"/>
</dbReference>
<dbReference type="Gene3D" id="2.40.30.10">
    <property type="entry name" value="Translation factors"/>
    <property type="match status" value="1"/>
</dbReference>
<dbReference type="HAMAP" id="MF_00071">
    <property type="entry name" value="LepA"/>
    <property type="match status" value="1"/>
</dbReference>
<dbReference type="InterPro" id="IPR006297">
    <property type="entry name" value="EF-4"/>
</dbReference>
<dbReference type="InterPro" id="IPR035647">
    <property type="entry name" value="EFG_III/V"/>
</dbReference>
<dbReference type="InterPro" id="IPR000640">
    <property type="entry name" value="EFG_V-like"/>
</dbReference>
<dbReference type="InterPro" id="IPR004161">
    <property type="entry name" value="EFTu-like_2"/>
</dbReference>
<dbReference type="InterPro" id="IPR031157">
    <property type="entry name" value="G_TR_CS"/>
</dbReference>
<dbReference type="InterPro" id="IPR038363">
    <property type="entry name" value="LepA_C_sf"/>
</dbReference>
<dbReference type="InterPro" id="IPR013842">
    <property type="entry name" value="LepA_CTD"/>
</dbReference>
<dbReference type="InterPro" id="IPR035654">
    <property type="entry name" value="LepA_IV"/>
</dbReference>
<dbReference type="InterPro" id="IPR027417">
    <property type="entry name" value="P-loop_NTPase"/>
</dbReference>
<dbReference type="InterPro" id="IPR005225">
    <property type="entry name" value="Small_GTP-bd"/>
</dbReference>
<dbReference type="InterPro" id="IPR000795">
    <property type="entry name" value="T_Tr_GTP-bd_dom"/>
</dbReference>
<dbReference type="InterPro" id="IPR009000">
    <property type="entry name" value="Transl_B-barrel_sf"/>
</dbReference>
<dbReference type="NCBIfam" id="TIGR01393">
    <property type="entry name" value="lepA"/>
    <property type="match status" value="1"/>
</dbReference>
<dbReference type="NCBIfam" id="TIGR00231">
    <property type="entry name" value="small_GTP"/>
    <property type="match status" value="1"/>
</dbReference>
<dbReference type="PANTHER" id="PTHR43512:SF4">
    <property type="entry name" value="TRANSLATION FACTOR GUF1 HOMOLOG, CHLOROPLASTIC"/>
    <property type="match status" value="1"/>
</dbReference>
<dbReference type="PANTHER" id="PTHR43512">
    <property type="entry name" value="TRANSLATION FACTOR GUF1-RELATED"/>
    <property type="match status" value="1"/>
</dbReference>
<dbReference type="Pfam" id="PF00679">
    <property type="entry name" value="EFG_C"/>
    <property type="match status" value="1"/>
</dbReference>
<dbReference type="Pfam" id="PF00009">
    <property type="entry name" value="GTP_EFTU"/>
    <property type="match status" value="1"/>
</dbReference>
<dbReference type="Pfam" id="PF03144">
    <property type="entry name" value="GTP_EFTU_D2"/>
    <property type="match status" value="1"/>
</dbReference>
<dbReference type="Pfam" id="PF06421">
    <property type="entry name" value="LepA_C"/>
    <property type="match status" value="1"/>
</dbReference>
<dbReference type="PRINTS" id="PR00315">
    <property type="entry name" value="ELONGATNFCT"/>
</dbReference>
<dbReference type="SMART" id="SM00838">
    <property type="entry name" value="EFG_C"/>
    <property type="match status" value="1"/>
</dbReference>
<dbReference type="SUPFAM" id="SSF54980">
    <property type="entry name" value="EF-G C-terminal domain-like"/>
    <property type="match status" value="2"/>
</dbReference>
<dbReference type="SUPFAM" id="SSF52540">
    <property type="entry name" value="P-loop containing nucleoside triphosphate hydrolases"/>
    <property type="match status" value="1"/>
</dbReference>
<dbReference type="SUPFAM" id="SSF50447">
    <property type="entry name" value="Translation proteins"/>
    <property type="match status" value="1"/>
</dbReference>
<dbReference type="PROSITE" id="PS00301">
    <property type="entry name" value="G_TR_1"/>
    <property type="match status" value="1"/>
</dbReference>
<dbReference type="PROSITE" id="PS51722">
    <property type="entry name" value="G_TR_2"/>
    <property type="match status" value="1"/>
</dbReference>
<keyword id="KW-0997">Cell inner membrane</keyword>
<keyword id="KW-1003">Cell membrane</keyword>
<keyword id="KW-0342">GTP-binding</keyword>
<keyword id="KW-0378">Hydrolase</keyword>
<keyword id="KW-0472">Membrane</keyword>
<keyword id="KW-0547">Nucleotide-binding</keyword>
<keyword id="KW-0648">Protein biosynthesis</keyword>
<protein>
    <recommendedName>
        <fullName evidence="1">Elongation factor 4</fullName>
        <shortName evidence="1">EF-4</shortName>
        <ecNumber evidence="1">3.6.5.n1</ecNumber>
    </recommendedName>
    <alternativeName>
        <fullName evidence="1">Ribosomal back-translocase LepA</fullName>
    </alternativeName>
</protein>
<name>LEPA_ALISL</name>
<accession>B6EKN1</accession>
<sequence>MKHIRNFSIIAHIDHGKSTLSDRLIQVCGGLSDREMAAQVLDSMDLERERGITIKAQSVTLNYTANDGETYQLNFIDTPGHVDFSYEVSRSLAACEGALLVVDAGQGVEAQTLANCYTALEMDLEVVPILNKIDLPAADPDRVAEEIEDIVGIEAMEATRCSAKTGLGVDAVLETIVKCIPAPEGNPEGPTQALIIDSWFDNYLGVVSLVRVKHGSLKKNDKIKVMSTGQAWNVDRIGIFTPKQVDTDGLNTGEVGWVVCGIKDILGAPVGDTLTHAKGGCEERLPGFQKVKPQVYAGLFPISSDDYENFRDALGKLSLNDASLFYEPESSSALGFGFRCGFLGMLHMEIIQERLEREYDLDLITTAPTVVYEVVLNNGDLLYVDSPAKLPAVNDLDEIREPIARCNILVPAEYLGNVISLCIEKRGTQVDMIYHGNQVALTYDIPMSEVVLDFFDRLKSTSRGYASLDYNFQRYELSNMVRVDVLINAERVDALAIITHHDNAQGRGRLLVEKMKEFIPRQMFDIAIQAAIGGHIIARSTVKQLRKNVIAKCYGGDISRKKKLLKKQKDGKKRMKQIGNVELPQEAFLAILHVGKD</sequence>
<organism>
    <name type="scientific">Aliivibrio salmonicida (strain LFI1238)</name>
    <name type="common">Vibrio salmonicida (strain LFI1238)</name>
    <dbReference type="NCBI Taxonomy" id="316275"/>
    <lineage>
        <taxon>Bacteria</taxon>
        <taxon>Pseudomonadati</taxon>
        <taxon>Pseudomonadota</taxon>
        <taxon>Gammaproteobacteria</taxon>
        <taxon>Vibrionales</taxon>
        <taxon>Vibrionaceae</taxon>
        <taxon>Aliivibrio</taxon>
    </lineage>
</organism>
<proteinExistence type="inferred from homology"/>
<reference key="1">
    <citation type="journal article" date="2008" name="BMC Genomics">
        <title>The genome sequence of the fish pathogen Aliivibrio salmonicida strain LFI1238 shows extensive evidence of gene decay.</title>
        <authorList>
            <person name="Hjerde E."/>
            <person name="Lorentzen M.S."/>
            <person name="Holden M.T."/>
            <person name="Seeger K."/>
            <person name="Paulsen S."/>
            <person name="Bason N."/>
            <person name="Churcher C."/>
            <person name="Harris D."/>
            <person name="Norbertczak H."/>
            <person name="Quail M.A."/>
            <person name="Sanders S."/>
            <person name="Thurston S."/>
            <person name="Parkhill J."/>
            <person name="Willassen N.P."/>
            <person name="Thomson N.R."/>
        </authorList>
    </citation>
    <scope>NUCLEOTIDE SEQUENCE [LARGE SCALE GENOMIC DNA]</scope>
    <source>
        <strain>LFI1238</strain>
    </source>
</reference>